<organism>
    <name type="scientific">Francisella tularensis subsp. holarctica (strain LVS)</name>
    <dbReference type="NCBI Taxonomy" id="376619"/>
    <lineage>
        <taxon>Bacteria</taxon>
        <taxon>Pseudomonadati</taxon>
        <taxon>Pseudomonadota</taxon>
        <taxon>Gammaproteobacteria</taxon>
        <taxon>Thiotrichales</taxon>
        <taxon>Francisellaceae</taxon>
        <taxon>Francisella</taxon>
    </lineage>
</organism>
<feature type="chain" id="PRO_1000010147" description="Ribosomal RNA small subunit methyltransferase G">
    <location>
        <begin position="1"/>
        <end position="205"/>
    </location>
</feature>
<feature type="binding site" evidence="1">
    <location>
        <position position="76"/>
    </location>
    <ligand>
        <name>S-adenosyl-L-methionine</name>
        <dbReference type="ChEBI" id="CHEBI:59789"/>
    </ligand>
</feature>
<feature type="binding site" evidence="1">
    <location>
        <position position="81"/>
    </location>
    <ligand>
        <name>S-adenosyl-L-methionine</name>
        <dbReference type="ChEBI" id="CHEBI:59789"/>
    </ligand>
</feature>
<feature type="binding site" evidence="1">
    <location>
        <begin position="127"/>
        <end position="128"/>
    </location>
    <ligand>
        <name>S-adenosyl-L-methionine</name>
        <dbReference type="ChEBI" id="CHEBI:59789"/>
    </ligand>
</feature>
<feature type="binding site" evidence="1">
    <location>
        <position position="140"/>
    </location>
    <ligand>
        <name>S-adenosyl-L-methionine</name>
        <dbReference type="ChEBI" id="CHEBI:59789"/>
    </ligand>
</feature>
<comment type="function">
    <text evidence="1">Specifically methylates the N7 position of guanine in position 527 of 16S rRNA.</text>
</comment>
<comment type="catalytic activity">
    <reaction evidence="1">
        <text>guanosine(527) in 16S rRNA + S-adenosyl-L-methionine = N(7)-methylguanosine(527) in 16S rRNA + S-adenosyl-L-homocysteine</text>
        <dbReference type="Rhea" id="RHEA:42732"/>
        <dbReference type="Rhea" id="RHEA-COMP:10209"/>
        <dbReference type="Rhea" id="RHEA-COMP:10210"/>
        <dbReference type="ChEBI" id="CHEBI:57856"/>
        <dbReference type="ChEBI" id="CHEBI:59789"/>
        <dbReference type="ChEBI" id="CHEBI:74269"/>
        <dbReference type="ChEBI" id="CHEBI:74480"/>
        <dbReference type="EC" id="2.1.1.170"/>
    </reaction>
</comment>
<comment type="subcellular location">
    <subcellularLocation>
        <location evidence="1">Cytoplasm</location>
    </subcellularLocation>
</comment>
<comment type="similarity">
    <text evidence="1">Belongs to the methyltransferase superfamily. RNA methyltransferase RsmG family.</text>
</comment>
<dbReference type="EC" id="2.1.1.170" evidence="1"/>
<dbReference type="EMBL" id="AM233362">
    <property type="protein sequence ID" value="CAJ78500.1"/>
    <property type="molecule type" value="Genomic_DNA"/>
</dbReference>
<dbReference type="RefSeq" id="WP_003013997.1">
    <property type="nucleotide sequence ID" value="NZ_CP009694.1"/>
</dbReference>
<dbReference type="SMR" id="Q2A5Y4"/>
<dbReference type="KEGG" id="ftl:FTL_0059"/>
<dbReference type="Proteomes" id="UP000001944">
    <property type="component" value="Chromosome"/>
</dbReference>
<dbReference type="GO" id="GO:0005829">
    <property type="term" value="C:cytosol"/>
    <property type="evidence" value="ECO:0007669"/>
    <property type="project" value="TreeGrafter"/>
</dbReference>
<dbReference type="GO" id="GO:0070043">
    <property type="term" value="F:rRNA (guanine-N7-)-methyltransferase activity"/>
    <property type="evidence" value="ECO:0007669"/>
    <property type="project" value="UniProtKB-UniRule"/>
</dbReference>
<dbReference type="Gene3D" id="3.40.50.150">
    <property type="entry name" value="Vaccinia Virus protein VP39"/>
    <property type="match status" value="1"/>
</dbReference>
<dbReference type="HAMAP" id="MF_00074">
    <property type="entry name" value="16SrRNA_methyltr_G"/>
    <property type="match status" value="1"/>
</dbReference>
<dbReference type="InterPro" id="IPR003682">
    <property type="entry name" value="rRNA_ssu_MeTfrase_G"/>
</dbReference>
<dbReference type="InterPro" id="IPR029063">
    <property type="entry name" value="SAM-dependent_MTases_sf"/>
</dbReference>
<dbReference type="NCBIfam" id="TIGR00138">
    <property type="entry name" value="rsmG_gidB"/>
    <property type="match status" value="1"/>
</dbReference>
<dbReference type="PANTHER" id="PTHR31760">
    <property type="entry name" value="S-ADENOSYL-L-METHIONINE-DEPENDENT METHYLTRANSFERASES SUPERFAMILY PROTEIN"/>
    <property type="match status" value="1"/>
</dbReference>
<dbReference type="PANTHER" id="PTHR31760:SF0">
    <property type="entry name" value="S-ADENOSYL-L-METHIONINE-DEPENDENT METHYLTRANSFERASES SUPERFAMILY PROTEIN"/>
    <property type="match status" value="1"/>
</dbReference>
<dbReference type="Pfam" id="PF02527">
    <property type="entry name" value="GidB"/>
    <property type="match status" value="1"/>
</dbReference>
<dbReference type="PIRSF" id="PIRSF003078">
    <property type="entry name" value="GidB"/>
    <property type="match status" value="1"/>
</dbReference>
<dbReference type="SUPFAM" id="SSF53335">
    <property type="entry name" value="S-adenosyl-L-methionine-dependent methyltransferases"/>
    <property type="match status" value="1"/>
</dbReference>
<name>RSMG_FRATH</name>
<keyword id="KW-0963">Cytoplasm</keyword>
<keyword id="KW-0489">Methyltransferase</keyword>
<keyword id="KW-1185">Reference proteome</keyword>
<keyword id="KW-0698">rRNA processing</keyword>
<keyword id="KW-0949">S-adenosyl-L-methionine</keyword>
<keyword id="KW-0808">Transferase</keyword>
<evidence type="ECO:0000255" key="1">
    <source>
        <dbReference type="HAMAP-Rule" id="MF_00074"/>
    </source>
</evidence>
<proteinExistence type="inferred from homology"/>
<gene>
    <name evidence="1" type="primary">rsmG</name>
    <name type="ordered locus">FTL_0059</name>
</gene>
<protein>
    <recommendedName>
        <fullName evidence="1">Ribosomal RNA small subunit methyltransferase G</fullName>
        <ecNumber evidence="1">2.1.1.170</ecNumber>
    </recommendedName>
    <alternativeName>
        <fullName evidence="1">16S rRNA 7-methylguanosine methyltransferase</fullName>
        <shortName evidence="1">16S rRNA m7G methyltransferase</shortName>
    </alternativeName>
</protein>
<accession>Q2A5Y4</accession>
<sequence>MDIMKDKIRQALSELDILATEVQIDQWLDYLKLLEKWNKVYNMTAIKNIDEMLVKHLFDSLAVAKYIKGDSTVDVGTGGGLPGVVLAILYPQHQFTLVDSVGKKIMFLKNVKKSLSLNNINPLNTRIENLEGNFDNIISRAFSSVDTFYELCKHFLTEHNQMLAMKGRDLEERNLESLPLNIEKYSIKVPFLNAERNLIVMRKKL</sequence>
<reference key="1">
    <citation type="submission" date="2006-03" db="EMBL/GenBank/DDBJ databases">
        <title>Complete genome sequence of Francisella tularensis LVS (Live Vaccine Strain).</title>
        <authorList>
            <person name="Chain P."/>
            <person name="Larimer F."/>
            <person name="Land M."/>
            <person name="Stilwagen S."/>
            <person name="Larsson P."/>
            <person name="Bearden S."/>
            <person name="Chu M."/>
            <person name="Oyston P."/>
            <person name="Forsman M."/>
            <person name="Andersson S."/>
            <person name="Lindler L."/>
            <person name="Titball R."/>
            <person name="Garcia E."/>
        </authorList>
    </citation>
    <scope>NUCLEOTIDE SEQUENCE [LARGE SCALE GENOMIC DNA]</scope>
    <source>
        <strain>LVS</strain>
    </source>
</reference>